<protein>
    <recommendedName>
        <fullName evidence="6">Flavin-dependent monooxygenase</fullName>
    </recommendedName>
    <alternativeName>
        <fullName evidence="5">Tetracycline destructase Tet(55)</fullName>
        <shortName>Tet(55)</shortName>
        <ecNumber evidence="4">1.14.13.-</ecNumber>
    </alternativeName>
</protein>
<evidence type="ECO:0000250" key="1">
    <source>
        <dbReference type="UniProtKB" id="A0A059WYP6"/>
    </source>
</evidence>
<evidence type="ECO:0000250" key="2">
    <source>
        <dbReference type="UniProtKB" id="Q93L51"/>
    </source>
</evidence>
<evidence type="ECO:0000269" key="3">
    <source>
    </source>
</evidence>
<evidence type="ECO:0000269" key="4">
    <source>
    </source>
</evidence>
<evidence type="ECO:0000303" key="5">
    <source>
    </source>
</evidence>
<evidence type="ECO:0000305" key="6"/>
<evidence type="ECO:0000305" key="7">
    <source>
    </source>
</evidence>
<evidence type="ECO:0000305" key="8">
    <source>
    </source>
</evidence>
<evidence type="ECO:0007744" key="9">
    <source>
        <dbReference type="PDB" id="5TUL"/>
    </source>
</evidence>
<evidence type="ECO:0007829" key="10">
    <source>
        <dbReference type="PDB" id="5TUL"/>
    </source>
</evidence>
<feature type="chain" id="PRO_0000448492" description="Flavin-dependent monooxygenase">
    <location>
        <begin position="1"/>
        <end position="385"/>
    </location>
</feature>
<feature type="binding site" evidence="1">
    <location>
        <begin position="12"/>
        <end position="15"/>
    </location>
    <ligand>
        <name>FAD</name>
        <dbReference type="ChEBI" id="CHEBI:57692"/>
    </ligand>
</feature>
<feature type="binding site" evidence="1">
    <location>
        <begin position="34"/>
        <end position="36"/>
    </location>
    <ligand>
        <name>FAD</name>
        <dbReference type="ChEBI" id="CHEBI:57692"/>
    </ligand>
</feature>
<feature type="binding site" evidence="1">
    <location>
        <begin position="44"/>
        <end position="47"/>
    </location>
    <ligand>
        <name>FAD</name>
        <dbReference type="ChEBI" id="CHEBI:57692"/>
    </ligand>
</feature>
<feature type="binding site" evidence="1">
    <location>
        <position position="105"/>
    </location>
    <ligand>
        <name>FAD</name>
        <dbReference type="ChEBI" id="CHEBI:57692"/>
    </ligand>
</feature>
<feature type="binding site" evidence="1">
    <location>
        <position position="267"/>
    </location>
    <ligand>
        <name>FAD</name>
        <dbReference type="ChEBI" id="CHEBI:57692"/>
    </ligand>
</feature>
<feature type="binding site" evidence="1">
    <location>
        <position position="289"/>
    </location>
    <ligand>
        <name>FAD</name>
        <dbReference type="ChEBI" id="CHEBI:57692"/>
    </ligand>
</feature>
<feature type="binding site" evidence="1">
    <location>
        <begin position="296"/>
        <end position="302"/>
    </location>
    <ligand>
        <name>FAD</name>
        <dbReference type="ChEBI" id="CHEBI:57692"/>
    </ligand>
</feature>
<feature type="strand" evidence="10">
    <location>
        <begin position="6"/>
        <end position="10"/>
    </location>
</feature>
<feature type="helix" evidence="10">
    <location>
        <begin position="15"/>
        <end position="25"/>
    </location>
</feature>
<feature type="strand" evidence="10">
    <location>
        <begin position="29"/>
        <end position="33"/>
    </location>
</feature>
<feature type="strand" evidence="10">
    <location>
        <begin position="35"/>
        <end position="38"/>
    </location>
</feature>
<feature type="strand" evidence="10">
    <location>
        <begin position="45"/>
        <end position="48"/>
    </location>
</feature>
<feature type="helix" evidence="10">
    <location>
        <begin position="51"/>
        <end position="58"/>
    </location>
</feature>
<feature type="helix" evidence="10">
    <location>
        <begin position="62"/>
        <end position="67"/>
    </location>
</feature>
<feature type="strand" evidence="10">
    <location>
        <begin position="74"/>
        <end position="78"/>
    </location>
</feature>
<feature type="strand" evidence="10">
    <location>
        <begin position="84"/>
        <end position="88"/>
    </location>
</feature>
<feature type="strand" evidence="10">
    <location>
        <begin position="101"/>
        <end position="104"/>
    </location>
</feature>
<feature type="helix" evidence="10">
    <location>
        <begin position="105"/>
        <end position="115"/>
    </location>
</feature>
<feature type="turn" evidence="10">
    <location>
        <begin position="116"/>
        <end position="118"/>
    </location>
</feature>
<feature type="strand" evidence="10">
    <location>
        <begin position="121"/>
        <end position="124"/>
    </location>
</feature>
<feature type="strand" evidence="10">
    <location>
        <begin position="127"/>
        <end position="132"/>
    </location>
</feature>
<feature type="strand" evidence="10">
    <location>
        <begin position="137"/>
        <end position="141"/>
    </location>
</feature>
<feature type="strand" evidence="10">
    <location>
        <begin position="146"/>
        <end position="154"/>
    </location>
</feature>
<feature type="helix" evidence="10">
    <location>
        <begin position="161"/>
        <end position="166"/>
    </location>
</feature>
<feature type="turn" evidence="10">
    <location>
        <begin position="169"/>
        <end position="171"/>
    </location>
</feature>
<feature type="strand" evidence="10">
    <location>
        <begin position="172"/>
        <end position="187"/>
    </location>
</feature>
<feature type="strand" evidence="10">
    <location>
        <begin position="193"/>
        <end position="201"/>
    </location>
</feature>
<feature type="strand" evidence="10">
    <location>
        <begin position="204"/>
        <end position="210"/>
    </location>
</feature>
<feature type="strand" evidence="10">
    <location>
        <begin position="216"/>
        <end position="224"/>
    </location>
</feature>
<feature type="helix" evidence="10">
    <location>
        <begin position="235"/>
        <end position="246"/>
    </location>
</feature>
<feature type="helix" evidence="10">
    <location>
        <begin position="253"/>
        <end position="259"/>
    </location>
</feature>
<feature type="helix" evidence="10">
    <location>
        <begin position="260"/>
        <end position="262"/>
    </location>
</feature>
<feature type="strand" evidence="10">
    <location>
        <begin position="267"/>
        <end position="277"/>
    </location>
</feature>
<feature type="strand" evidence="10">
    <location>
        <begin position="279"/>
        <end position="281"/>
    </location>
</feature>
<feature type="strand" evidence="10">
    <location>
        <begin position="284"/>
        <end position="286"/>
    </location>
</feature>
<feature type="helix" evidence="10">
    <location>
        <begin position="289"/>
        <end position="292"/>
    </location>
</feature>
<feature type="turn" evidence="10">
    <location>
        <begin position="296"/>
        <end position="298"/>
    </location>
</feature>
<feature type="helix" evidence="10">
    <location>
        <begin position="301"/>
        <end position="318"/>
    </location>
</feature>
<feature type="strand" evidence="10">
    <location>
        <begin position="319"/>
        <end position="321"/>
    </location>
</feature>
<feature type="helix" evidence="10">
    <location>
        <begin position="322"/>
        <end position="350"/>
    </location>
</feature>
<feature type="helix" evidence="10">
    <location>
        <begin position="359"/>
        <end position="377"/>
    </location>
</feature>
<dbReference type="EC" id="1.14.13.-" evidence="4"/>
<dbReference type="EMBL" id="KR857689">
    <property type="protein sequence ID" value="AKQ05899.1"/>
    <property type="molecule type" value="Genomic_DNA"/>
</dbReference>
<dbReference type="PDB" id="5TUL">
    <property type="method" value="X-ray"/>
    <property type="resolution" value="2.00 A"/>
    <property type="chains" value="A=1-385"/>
</dbReference>
<dbReference type="PDBsum" id="5TUL"/>
<dbReference type="SMR" id="A0A0H4TXY1"/>
<dbReference type="CARD" id="ARO:3004591">
    <property type="molecule name" value="tet(55)"/>
    <property type="mechanism identifier" value="ARO:0001004"/>
    <property type="mechanism name" value="antibiotic inactivation"/>
</dbReference>
<dbReference type="GO" id="GO:0071949">
    <property type="term" value="F:FAD binding"/>
    <property type="evidence" value="ECO:0007669"/>
    <property type="project" value="InterPro"/>
</dbReference>
<dbReference type="GO" id="GO:0016491">
    <property type="term" value="F:oxidoreductase activity"/>
    <property type="evidence" value="ECO:0007669"/>
    <property type="project" value="UniProtKB-KW"/>
</dbReference>
<dbReference type="GO" id="GO:0046677">
    <property type="term" value="P:response to antibiotic"/>
    <property type="evidence" value="ECO:0007669"/>
    <property type="project" value="UniProtKB-KW"/>
</dbReference>
<dbReference type="Gene3D" id="3.30.9.10">
    <property type="entry name" value="D-Amino Acid Oxidase, subunit A, domain 2"/>
    <property type="match status" value="1"/>
</dbReference>
<dbReference type="Gene3D" id="3.50.50.60">
    <property type="entry name" value="FAD/NAD(P)-binding domain"/>
    <property type="match status" value="1"/>
</dbReference>
<dbReference type="InterPro" id="IPR002938">
    <property type="entry name" value="FAD-bd"/>
</dbReference>
<dbReference type="InterPro" id="IPR036188">
    <property type="entry name" value="FAD/NAD-bd_sf"/>
</dbReference>
<dbReference type="InterPro" id="IPR051704">
    <property type="entry name" value="FAD_aromatic-hydroxylase"/>
</dbReference>
<dbReference type="NCBIfam" id="NF033476">
    <property type="entry name" value="tet_destruct"/>
    <property type="match status" value="1"/>
</dbReference>
<dbReference type="PANTHER" id="PTHR46865:SF2">
    <property type="entry name" value="MONOOXYGENASE"/>
    <property type="match status" value="1"/>
</dbReference>
<dbReference type="PANTHER" id="PTHR46865">
    <property type="entry name" value="OXIDOREDUCTASE-RELATED"/>
    <property type="match status" value="1"/>
</dbReference>
<dbReference type="Pfam" id="PF01494">
    <property type="entry name" value="FAD_binding_3"/>
    <property type="match status" value="1"/>
</dbReference>
<dbReference type="PRINTS" id="PR00420">
    <property type="entry name" value="RNGMNOXGNASE"/>
</dbReference>
<dbReference type="SUPFAM" id="SSF51905">
    <property type="entry name" value="FAD/NAD(P)-binding domain"/>
    <property type="match status" value="1"/>
</dbReference>
<gene>
    <name evidence="5" type="primary">tet(55)</name>
</gene>
<reference key="1">
    <citation type="journal article" date="2015" name="Chem. Biol.">
        <title>The Tetracycline Destructases: A Novel Family of Tetracycline-Inactivating Enzymes.</title>
        <authorList>
            <person name="Forsberg K.J."/>
            <person name="Patel S."/>
            <person name="Wencewicz T.A."/>
            <person name="Dantas G."/>
        </authorList>
    </citation>
    <scope>NUCLEOTIDE SEQUENCE [GENOMIC DNA]</scope>
    <scope>FUNCTION IN INACTIVATING TETRACYCLINE</scope>
    <scope>ANTIBIOTIC RESISTANCE</scope>
</reference>
<reference evidence="9" key="2">
    <citation type="journal article" date="2017" name="Nat. Chem. Biol.">
        <title>Plasticity, dynamics, and inhibition of emerging tetracycline resistance enzymes.</title>
        <authorList>
            <person name="Park J."/>
            <person name="Gasparrini A.J."/>
            <person name="Reck M.R."/>
            <person name="Symister C.T."/>
            <person name="Elliott J.L."/>
            <person name="Vogel J.P."/>
            <person name="Wencewicz T.A."/>
            <person name="Dantas G."/>
            <person name="Tolia N.H."/>
        </authorList>
    </citation>
    <scope>X-RAY CRYSTALLOGRAPHY (2.00 ANGSTROMS)</scope>
    <scope>FUNCTION</scope>
    <scope>SUBSTRATE SPECIFICITY</scope>
    <scope>ACTIVITY REGULATION</scope>
    <scope>DOMAIN</scope>
    <scope>ANTIBIOTIC RESISTANCE</scope>
</reference>
<keyword id="KW-0002">3D-structure</keyword>
<keyword id="KW-0046">Antibiotic resistance</keyword>
<keyword id="KW-0274">FAD</keyword>
<keyword id="KW-0285">Flavoprotein</keyword>
<keyword id="KW-0521">NADP</keyword>
<keyword id="KW-0547">Nucleotide-binding</keyword>
<keyword id="KW-0560">Oxidoreductase</keyword>
<sequence length="385" mass="42982">MPHTKKILVIGASIAGPALCYWLNHYGFQPTLVEKNQSTRKGGYAIDLRGIAVDVAKQMGIYDSVCAMRTSLQCVRYVDAAGNLLFEEHGEKGGFRQGDEVEIVRGDLVDILMKTITDIPCFYDHAIESLTQHDDHVTVQFKNGKTENYDLVIAADGLHSATRRMVFSKDDYHLRNLGCYISVFSIPNYLQLDHCETLLEAKQKLVSITSDKDSTKAFAGFMFRSSNSPNYIRDEASQKDFLRENFTNHGWESNKLLSLMNDANDFYFDAIMQVKMKDWTKGRIALVGDAGYTPSPLSGQGTSLALVGAYILAGELKTATDHVAAFARYNELLKPYVEANQAFGVWVSESFLADEPLSAEQAEERNNIVLGIMKKATHAIELPEY</sequence>
<comment type="function">
    <text evidence="3 4">An FAD-requiring monooxygenase active on tetracycline antibiotic and some of its derivatives, which leads to their inactivation (PubMed:26097034). Expression in E.coli confers high resistance to oxytetracycline, slightly less resistance to tetracycline, moderate resistance to minocycline but no resistance to tigecycline. Degrades tetracycline and oxytetracycline; the reaction requires NADPH (PubMed:26097034). Degrades and confers resistance to chlortetracycline (PubMed:28481346).</text>
</comment>
<comment type="catalytic activity">
    <reaction evidence="4">
        <text>7-chlorotetracycline + NADPH + O2 + H(+) = (1S,10S,10aS)-3-(CONH2)-9-Cl-1-(Me2N)-3,3a,4,10-(HO)4-10-Me-2,5-dioxo-1H,10aH,11H,11aH-cyclopenta[b]anthracen-6-olate + CO + NADP(+) + H2O</text>
        <dbReference type="Rhea" id="RHEA:61456"/>
        <dbReference type="ChEBI" id="CHEBI:15377"/>
        <dbReference type="ChEBI" id="CHEBI:15378"/>
        <dbReference type="ChEBI" id="CHEBI:15379"/>
        <dbReference type="ChEBI" id="CHEBI:17245"/>
        <dbReference type="ChEBI" id="CHEBI:57783"/>
        <dbReference type="ChEBI" id="CHEBI:58349"/>
        <dbReference type="ChEBI" id="CHEBI:133598"/>
        <dbReference type="ChEBI" id="CHEBI:144647"/>
    </reaction>
</comment>
<comment type="catalytic activity">
    <reaction evidence="7 8">
        <text>a tetracycline + NADPH + O2 + H(+) = a (1S,10aS)-3-(CONH2)-1-(Me2N)-3,3a,4,6-(HO)4-2,5-dioxo-1H,10aH,11H,11aH-cyclopenta[b]anthracene + CO + NADP(+) + H2O</text>
        <dbReference type="Rhea" id="RHEA:61564"/>
        <dbReference type="ChEBI" id="CHEBI:15377"/>
        <dbReference type="ChEBI" id="CHEBI:15378"/>
        <dbReference type="ChEBI" id="CHEBI:15379"/>
        <dbReference type="ChEBI" id="CHEBI:17245"/>
        <dbReference type="ChEBI" id="CHEBI:57783"/>
        <dbReference type="ChEBI" id="CHEBI:58349"/>
        <dbReference type="ChEBI" id="CHEBI:144644"/>
        <dbReference type="ChEBI" id="CHEBI:144803"/>
    </reaction>
</comment>
<comment type="cofactor">
    <cofactor evidence="8">
        <name>FAD</name>
        <dbReference type="ChEBI" id="CHEBI:57692"/>
    </cofactor>
    <text evidence="8">Binds 1 FAD per subunit.</text>
</comment>
<comment type="activity regulation">
    <text evidence="4">Inhibited by anhydrotetracycline.</text>
</comment>
<comment type="domain">
    <text evidence="4">Consists of an N-terminal FAD-binding domain with a Rossman fold, a substrate-binding domain and a C-terminal helix that bridges the 2 domains close to the antibiotic-binding site. This last helix is flexible, is not found in TetX of Bacteroides species, and may contribute to their different substrate specificities.</text>
</comment>
<comment type="miscellaneous">
    <text evidence="7">Isolated from an agricultural soil sample.</text>
</comment>
<comment type="miscellaneous">
    <text evidence="2">Tetracycline antibiotics bind to the ribosomal acceptor site (A-site), preventing binding of the aminoacyl-tRNA to the A-site. The hydrophilic side of tetracycline makes many hydrogen-bonding interactions with oxygen atoms of the ribosome's phosphate backbone.</text>
</comment>
<comment type="similarity">
    <text evidence="6">Belongs to the aromatic-ring hydroxylase family.</text>
</comment>
<accession>A0A0H4TXY1</accession>
<name>TET55_UNKP</name>
<proteinExistence type="evidence at protein level"/>
<organism>
    <name type="scientific">Unknown prokaryotic organism</name>
    <dbReference type="NCBI Taxonomy" id="2725"/>
    <lineage>
        <taxon>Bacteria</taxon>
        <taxon>environmental samples</taxon>
    </lineage>
</organism>